<keyword id="KW-0472">Membrane</keyword>
<keyword id="KW-1185">Reference proteome</keyword>
<keyword id="KW-0812">Transmembrane</keyword>
<keyword id="KW-1133">Transmembrane helix</keyword>
<proteinExistence type="predicted"/>
<sequence length="71" mass="7051">MVLENFKWSWISVGVTVGVGVGVCDGDGVGVGIGVGIGVGVSDGVSAGVGVGVAMIIQTSPSACKKYYKLY</sequence>
<dbReference type="EMBL" id="AAFI02000003">
    <property type="protein sequence ID" value="EAL73724.1"/>
    <property type="molecule type" value="Genomic_DNA"/>
</dbReference>
<dbReference type="RefSeq" id="XP_647404.1">
    <property type="nucleotide sequence ID" value="XM_642312.1"/>
</dbReference>
<dbReference type="PaxDb" id="44689-DDB0216564"/>
<dbReference type="EnsemblProtists" id="EAL73724">
    <property type="protein sequence ID" value="EAL73724"/>
    <property type="gene ID" value="DDB_G0268542"/>
</dbReference>
<dbReference type="GeneID" id="8616211"/>
<dbReference type="KEGG" id="ddi:DDB_G0268542"/>
<dbReference type="dictyBase" id="DDB_G0268542"/>
<dbReference type="HOGENOM" id="CLU_2745359_0_0_1"/>
<dbReference type="InParanoid" id="Q55FX9"/>
<dbReference type="PRO" id="PR:Q55FX9"/>
<dbReference type="Proteomes" id="UP000002195">
    <property type="component" value="Chromosome 1"/>
</dbReference>
<dbReference type="GO" id="GO:0016020">
    <property type="term" value="C:membrane"/>
    <property type="evidence" value="ECO:0007669"/>
    <property type="project" value="UniProtKB-SubCell"/>
</dbReference>
<reference key="1">
    <citation type="journal article" date="2005" name="Nature">
        <title>The genome of the social amoeba Dictyostelium discoideum.</title>
        <authorList>
            <person name="Eichinger L."/>
            <person name="Pachebat J.A."/>
            <person name="Gloeckner G."/>
            <person name="Rajandream M.A."/>
            <person name="Sucgang R."/>
            <person name="Berriman M."/>
            <person name="Song J."/>
            <person name="Olsen R."/>
            <person name="Szafranski K."/>
            <person name="Xu Q."/>
            <person name="Tunggal B."/>
            <person name="Kummerfeld S."/>
            <person name="Madera M."/>
            <person name="Konfortov B.A."/>
            <person name="Rivero F."/>
            <person name="Bankier A.T."/>
            <person name="Lehmann R."/>
            <person name="Hamlin N."/>
            <person name="Davies R."/>
            <person name="Gaudet P."/>
            <person name="Fey P."/>
            <person name="Pilcher K."/>
            <person name="Chen G."/>
            <person name="Saunders D."/>
            <person name="Sodergren E.J."/>
            <person name="Davis P."/>
            <person name="Kerhornou A."/>
            <person name="Nie X."/>
            <person name="Hall N."/>
            <person name="Anjard C."/>
            <person name="Hemphill L."/>
            <person name="Bason N."/>
            <person name="Farbrother P."/>
            <person name="Desany B."/>
            <person name="Just E."/>
            <person name="Morio T."/>
            <person name="Rost R."/>
            <person name="Churcher C.M."/>
            <person name="Cooper J."/>
            <person name="Haydock S."/>
            <person name="van Driessche N."/>
            <person name="Cronin A."/>
            <person name="Goodhead I."/>
            <person name="Muzny D.M."/>
            <person name="Mourier T."/>
            <person name="Pain A."/>
            <person name="Lu M."/>
            <person name="Harper D."/>
            <person name="Lindsay R."/>
            <person name="Hauser H."/>
            <person name="James K.D."/>
            <person name="Quiles M."/>
            <person name="Madan Babu M."/>
            <person name="Saito T."/>
            <person name="Buchrieser C."/>
            <person name="Wardroper A."/>
            <person name="Felder M."/>
            <person name="Thangavelu M."/>
            <person name="Johnson D."/>
            <person name="Knights A."/>
            <person name="Loulseged H."/>
            <person name="Mungall K.L."/>
            <person name="Oliver K."/>
            <person name="Price C."/>
            <person name="Quail M.A."/>
            <person name="Urushihara H."/>
            <person name="Hernandez J."/>
            <person name="Rabbinowitsch E."/>
            <person name="Steffen D."/>
            <person name="Sanders M."/>
            <person name="Ma J."/>
            <person name="Kohara Y."/>
            <person name="Sharp S."/>
            <person name="Simmonds M.N."/>
            <person name="Spiegler S."/>
            <person name="Tivey A."/>
            <person name="Sugano S."/>
            <person name="White B."/>
            <person name="Walker D."/>
            <person name="Woodward J.R."/>
            <person name="Winckler T."/>
            <person name="Tanaka Y."/>
            <person name="Shaulsky G."/>
            <person name="Schleicher M."/>
            <person name="Weinstock G.M."/>
            <person name="Rosenthal A."/>
            <person name="Cox E.C."/>
            <person name="Chisholm R.L."/>
            <person name="Gibbs R.A."/>
            <person name="Loomis W.F."/>
            <person name="Platzer M."/>
            <person name="Kay R.R."/>
            <person name="Williams J.G."/>
            <person name="Dear P.H."/>
            <person name="Noegel A.A."/>
            <person name="Barrell B.G."/>
            <person name="Kuspa A."/>
        </authorList>
    </citation>
    <scope>NUCLEOTIDE SEQUENCE [LARGE SCALE GENOMIC DNA]</scope>
    <source>
        <strain>AX4</strain>
    </source>
</reference>
<comment type="subcellular location">
    <subcellularLocation>
        <location evidence="2">Membrane</location>
        <topology evidence="2">Single-pass membrane protein</topology>
    </subcellularLocation>
</comment>
<organism>
    <name type="scientific">Dictyostelium discoideum</name>
    <name type="common">Social amoeba</name>
    <dbReference type="NCBI Taxonomy" id="44689"/>
    <lineage>
        <taxon>Eukaryota</taxon>
        <taxon>Amoebozoa</taxon>
        <taxon>Evosea</taxon>
        <taxon>Eumycetozoa</taxon>
        <taxon>Dictyostelia</taxon>
        <taxon>Dictyosteliales</taxon>
        <taxon>Dictyosteliaceae</taxon>
        <taxon>Dictyostelium</taxon>
    </lineage>
</organism>
<feature type="chain" id="PRO_0000348108" description="Putative uncharacterized protein DDB_G0268542">
    <location>
        <begin position="1"/>
        <end position="71"/>
    </location>
</feature>
<feature type="transmembrane region" description="Helical" evidence="1">
    <location>
        <begin position="37"/>
        <end position="57"/>
    </location>
</feature>
<evidence type="ECO:0000255" key="1"/>
<evidence type="ECO:0000305" key="2"/>
<gene>
    <name type="ORF">DDB_G0268542</name>
</gene>
<protein>
    <recommendedName>
        <fullName>Putative uncharacterized protein DDB_G0268542</fullName>
    </recommendedName>
</protein>
<name>Y6564_DICDI</name>
<accession>Q55FX9</accession>